<gene>
    <name type="primary">pepP</name>
    <name type="ORF">AN5810</name>
</gene>
<comment type="function">
    <text evidence="1">Catalyzes the removal of a penultimate prolyl residue from the N-termini of peptides.</text>
</comment>
<comment type="catalytic activity">
    <reaction>
        <text>Release of any N-terminal amino acid, including proline, that is linked to proline, even from a dipeptide or tripeptide.</text>
        <dbReference type="EC" id="3.4.11.9"/>
    </reaction>
</comment>
<comment type="cofactor">
    <cofactor evidence="1">
        <name>Mn(2+)</name>
        <dbReference type="ChEBI" id="CHEBI:29035"/>
    </cofactor>
    <text evidence="1">Binds 2 manganese ions per subunit.</text>
</comment>
<comment type="similarity">
    <text evidence="2">Belongs to the peptidase M24B family.</text>
</comment>
<comment type="sequence caution" evidence="2">
    <conflict type="erroneous initiation">
        <sequence resource="EMBL-CDS" id="CAC39600"/>
    </conflict>
    <text>Extended N-terminus.</text>
</comment>
<comment type="sequence caution" evidence="2">
    <conflict type="erroneous initiation">
        <sequence resource="EMBL-CDS" id="EAA58319"/>
    </conflict>
    <text>Extended N-terminus.</text>
</comment>
<name>AMPP3_EMENI</name>
<proteinExistence type="inferred from homology"/>
<accession>Q96WX8</accession>
<accession>C8V093</accession>
<accession>Q5B0X0</accession>
<keyword id="KW-0031">Aminopeptidase</keyword>
<keyword id="KW-0378">Hydrolase</keyword>
<keyword id="KW-0464">Manganese</keyword>
<keyword id="KW-0479">Metal-binding</keyword>
<keyword id="KW-0482">Metalloprotease</keyword>
<keyword id="KW-0645">Protease</keyword>
<keyword id="KW-1185">Reference proteome</keyword>
<protein>
    <recommendedName>
        <fullName>Probable Xaa-Pro aminopeptidase pepP</fullName>
        <ecNumber>3.4.11.9</ecNumber>
    </recommendedName>
    <alternativeName>
        <fullName>Aminoacylproline aminopeptidase</fullName>
    </alternativeName>
    <alternativeName>
        <fullName>Prolidase</fullName>
    </alternativeName>
</protein>
<feature type="chain" id="PRO_0000411872" description="Probable Xaa-Pro aminopeptidase pepP">
    <location>
        <begin position="1"/>
        <end position="465"/>
    </location>
</feature>
<feature type="binding site" evidence="1">
    <location>
        <position position="263"/>
    </location>
    <ligand>
        <name>Mn(2+)</name>
        <dbReference type="ChEBI" id="CHEBI:29035"/>
        <label>2</label>
    </ligand>
</feature>
<feature type="binding site" evidence="1">
    <location>
        <position position="274"/>
    </location>
    <ligand>
        <name>Mn(2+)</name>
        <dbReference type="ChEBI" id="CHEBI:29035"/>
        <label>1</label>
    </ligand>
</feature>
<feature type="binding site" evidence="1">
    <location>
        <position position="274"/>
    </location>
    <ligand>
        <name>Mn(2+)</name>
        <dbReference type="ChEBI" id="CHEBI:29035"/>
        <label>2</label>
    </ligand>
</feature>
<feature type="binding site" evidence="1">
    <location>
        <position position="397"/>
    </location>
    <ligand>
        <name>Mn(2+)</name>
        <dbReference type="ChEBI" id="CHEBI:29035"/>
        <label>1</label>
    </ligand>
</feature>
<feature type="binding site" evidence="1">
    <location>
        <position position="437"/>
    </location>
    <ligand>
        <name>Mn(2+)</name>
        <dbReference type="ChEBI" id="CHEBI:29035"/>
        <label>1</label>
    </ligand>
</feature>
<feature type="binding site" evidence="1">
    <location>
        <position position="437"/>
    </location>
    <ligand>
        <name>Mn(2+)</name>
        <dbReference type="ChEBI" id="CHEBI:29035"/>
        <label>2</label>
    </ligand>
</feature>
<sequence>MTSLDSILADKYPAKAHARRVAEGLKALGHSGGAIYLEAQKTRLIEDNDEPVPFRQRRPFFYLSGCLLPDSSLVYNIDSDQLTLFIPPINPDDVIWSGLPLSAAEALERYDVDNVLETTEVNATLANIAASHANNSTAFAIAEQVSEGTKFEGFSETNFNVLKGVIERTRVVKDSYEIALLRKANDISAKGHIAAIKASKSATNEREIEAAFIATCIANGAREQSYHPIVACGQNGATLHYGKNDEDLIDPVTNRRKDNVLIDAGAEYRTYCADITRAFPLNGKFLPETRQIYEIVLRMQLECIDMLKEGVQWEDVHAHAHRVAIRGLLELGILRGSEDELFDKRISVAFFPHGLGHYLGMDTHDTGGNPNYEDTDTMFRYLRVRGRLPAGSVITVEPGIYFCRFIIEPFLKNPDLQKYIDVGTLNRYWRVGGVRIEDNVHITKDGHDNLTTAPKTIEEVESLAA</sequence>
<reference key="1">
    <citation type="submission" date="2000-08" db="EMBL/GenBank/DDBJ databases">
        <title>Cloning, purification and characterisation of an Aspergillus nidulans prolidase.</title>
        <authorList>
            <person name="Jalving R."/>
            <person name="Bron P."/>
            <person name="Kester H.C.M."/>
            <person name="Visser J."/>
            <person name="Schaap P.J."/>
        </authorList>
    </citation>
    <scope>NUCLEOTIDE SEQUENCE [GENOMIC DNA]</scope>
    <source>
        <strain>WG312</strain>
    </source>
</reference>
<reference key="2">
    <citation type="journal article" date="2005" name="Nature">
        <title>Sequencing of Aspergillus nidulans and comparative analysis with A. fumigatus and A. oryzae.</title>
        <authorList>
            <person name="Galagan J.E."/>
            <person name="Calvo S.E."/>
            <person name="Cuomo C."/>
            <person name="Ma L.-J."/>
            <person name="Wortman J.R."/>
            <person name="Batzoglou S."/>
            <person name="Lee S.-I."/>
            <person name="Bastuerkmen M."/>
            <person name="Spevak C.C."/>
            <person name="Clutterbuck J."/>
            <person name="Kapitonov V."/>
            <person name="Jurka J."/>
            <person name="Scazzocchio C."/>
            <person name="Farman M.L."/>
            <person name="Butler J."/>
            <person name="Purcell S."/>
            <person name="Harris S."/>
            <person name="Braus G.H."/>
            <person name="Draht O."/>
            <person name="Busch S."/>
            <person name="D'Enfert C."/>
            <person name="Bouchier C."/>
            <person name="Goldman G.H."/>
            <person name="Bell-Pedersen D."/>
            <person name="Griffiths-Jones S."/>
            <person name="Doonan J.H."/>
            <person name="Yu J."/>
            <person name="Vienken K."/>
            <person name="Pain A."/>
            <person name="Freitag M."/>
            <person name="Selker E.U."/>
            <person name="Archer D.B."/>
            <person name="Penalva M.A."/>
            <person name="Oakley B.R."/>
            <person name="Momany M."/>
            <person name="Tanaka T."/>
            <person name="Kumagai T."/>
            <person name="Asai K."/>
            <person name="Machida M."/>
            <person name="Nierman W.C."/>
            <person name="Denning D.W."/>
            <person name="Caddick M.X."/>
            <person name="Hynes M."/>
            <person name="Paoletti M."/>
            <person name="Fischer R."/>
            <person name="Miller B.L."/>
            <person name="Dyer P.S."/>
            <person name="Sachs M.S."/>
            <person name="Osmani S.A."/>
            <person name="Birren B.W."/>
        </authorList>
    </citation>
    <scope>NUCLEOTIDE SEQUENCE [LARGE SCALE GENOMIC DNA]</scope>
    <source>
        <strain>FGSC A4 / ATCC 38163 / CBS 112.46 / NRRL 194 / M139</strain>
    </source>
</reference>
<reference key="3">
    <citation type="journal article" date="2009" name="Fungal Genet. Biol.">
        <title>The 2008 update of the Aspergillus nidulans genome annotation: a community effort.</title>
        <authorList>
            <person name="Wortman J.R."/>
            <person name="Gilsenan J.M."/>
            <person name="Joardar V."/>
            <person name="Deegan J."/>
            <person name="Clutterbuck J."/>
            <person name="Andersen M.R."/>
            <person name="Archer D."/>
            <person name="Bencina M."/>
            <person name="Braus G."/>
            <person name="Coutinho P."/>
            <person name="von Dohren H."/>
            <person name="Doonan J."/>
            <person name="Driessen A.J."/>
            <person name="Durek P."/>
            <person name="Espeso E."/>
            <person name="Fekete E."/>
            <person name="Flipphi M."/>
            <person name="Estrada C.G."/>
            <person name="Geysens S."/>
            <person name="Goldman G."/>
            <person name="de Groot P.W."/>
            <person name="Hansen K."/>
            <person name="Harris S.D."/>
            <person name="Heinekamp T."/>
            <person name="Helmstaedt K."/>
            <person name="Henrissat B."/>
            <person name="Hofmann G."/>
            <person name="Homan T."/>
            <person name="Horio T."/>
            <person name="Horiuchi H."/>
            <person name="James S."/>
            <person name="Jones M."/>
            <person name="Karaffa L."/>
            <person name="Karanyi Z."/>
            <person name="Kato M."/>
            <person name="Keller N."/>
            <person name="Kelly D.E."/>
            <person name="Kiel J.A."/>
            <person name="Kim J.M."/>
            <person name="van der Klei I.J."/>
            <person name="Klis F.M."/>
            <person name="Kovalchuk A."/>
            <person name="Krasevec N."/>
            <person name="Kubicek C.P."/>
            <person name="Liu B."/>
            <person name="Maccabe A."/>
            <person name="Meyer V."/>
            <person name="Mirabito P."/>
            <person name="Miskei M."/>
            <person name="Mos M."/>
            <person name="Mullins J."/>
            <person name="Nelson D.R."/>
            <person name="Nielsen J."/>
            <person name="Oakley B.R."/>
            <person name="Osmani S.A."/>
            <person name="Pakula T."/>
            <person name="Paszewski A."/>
            <person name="Paulsen I."/>
            <person name="Pilsyk S."/>
            <person name="Pocsi I."/>
            <person name="Punt P.J."/>
            <person name="Ram A.F."/>
            <person name="Ren Q."/>
            <person name="Robellet X."/>
            <person name="Robson G."/>
            <person name="Seiboth B."/>
            <person name="van Solingen P."/>
            <person name="Specht T."/>
            <person name="Sun J."/>
            <person name="Taheri-Talesh N."/>
            <person name="Takeshita N."/>
            <person name="Ussery D."/>
            <person name="vanKuyk P.A."/>
            <person name="Visser H."/>
            <person name="van de Vondervoort P.J."/>
            <person name="de Vries R.P."/>
            <person name="Walton J."/>
            <person name="Xiang X."/>
            <person name="Xiong Y."/>
            <person name="Zeng A.P."/>
            <person name="Brandt B.W."/>
            <person name="Cornell M.J."/>
            <person name="van den Hondel C.A."/>
            <person name="Visser J."/>
            <person name="Oliver S.G."/>
            <person name="Turner G."/>
        </authorList>
    </citation>
    <scope>GENOME REANNOTATION</scope>
    <source>
        <strain>FGSC A4 / ATCC 38163 / CBS 112.46 / NRRL 194 / M139</strain>
    </source>
</reference>
<dbReference type="EC" id="3.4.11.9"/>
<dbReference type="EMBL" id="AJ296646">
    <property type="protein sequence ID" value="CAC39600.1"/>
    <property type="status" value="ALT_INIT"/>
    <property type="molecule type" value="Genomic_DNA"/>
</dbReference>
<dbReference type="EMBL" id="AACD01000100">
    <property type="protein sequence ID" value="EAA58319.1"/>
    <property type="status" value="ALT_INIT"/>
    <property type="molecule type" value="Genomic_DNA"/>
</dbReference>
<dbReference type="EMBL" id="BN001301">
    <property type="protein sequence ID" value="CBF70800.1"/>
    <property type="molecule type" value="Genomic_DNA"/>
</dbReference>
<dbReference type="RefSeq" id="XP_663414.1">
    <property type="nucleotide sequence ID" value="XM_658322.1"/>
</dbReference>
<dbReference type="SMR" id="Q96WX8"/>
<dbReference type="FunCoup" id="Q96WX8">
    <property type="interactions" value="404"/>
</dbReference>
<dbReference type="STRING" id="227321.Q96WX8"/>
<dbReference type="MEROPS" id="M24.A09"/>
<dbReference type="EnsemblFungi" id="CBF70800">
    <property type="protein sequence ID" value="CBF70800"/>
    <property type="gene ID" value="ANIA_05810"/>
</dbReference>
<dbReference type="KEGG" id="ani:ANIA_05810"/>
<dbReference type="VEuPathDB" id="FungiDB:AN5810"/>
<dbReference type="eggNOG" id="KOG2737">
    <property type="taxonomic scope" value="Eukaryota"/>
</dbReference>
<dbReference type="HOGENOM" id="CLU_017266_1_2_1"/>
<dbReference type="InParanoid" id="Q96WX8"/>
<dbReference type="OMA" id="DAHALFF"/>
<dbReference type="OrthoDB" id="10261878at2759"/>
<dbReference type="Proteomes" id="UP000000560">
    <property type="component" value="Chromosome I"/>
</dbReference>
<dbReference type="GO" id="GO:0016805">
    <property type="term" value="F:dipeptidase activity"/>
    <property type="evidence" value="ECO:0000314"/>
    <property type="project" value="AspGD"/>
</dbReference>
<dbReference type="GO" id="GO:0030145">
    <property type="term" value="F:manganese ion binding"/>
    <property type="evidence" value="ECO:0007669"/>
    <property type="project" value="InterPro"/>
</dbReference>
<dbReference type="GO" id="GO:0070006">
    <property type="term" value="F:metalloaminopeptidase activity"/>
    <property type="evidence" value="ECO:0007669"/>
    <property type="project" value="InterPro"/>
</dbReference>
<dbReference type="GO" id="GO:0008233">
    <property type="term" value="F:peptidase activity"/>
    <property type="evidence" value="ECO:0000318"/>
    <property type="project" value="GO_Central"/>
</dbReference>
<dbReference type="GO" id="GO:0006508">
    <property type="term" value="P:proteolysis"/>
    <property type="evidence" value="ECO:0000318"/>
    <property type="project" value="GO_Central"/>
</dbReference>
<dbReference type="CDD" id="cd01087">
    <property type="entry name" value="Prolidase"/>
    <property type="match status" value="1"/>
</dbReference>
<dbReference type="FunFam" id="3.90.230.10:FF:000002">
    <property type="entry name" value="Xaa-Pro aminopeptidase 3"/>
    <property type="match status" value="1"/>
</dbReference>
<dbReference type="Gene3D" id="3.90.230.10">
    <property type="entry name" value="Creatinase/methionine aminopeptidase superfamily"/>
    <property type="match status" value="1"/>
</dbReference>
<dbReference type="Gene3D" id="3.40.350.10">
    <property type="entry name" value="Creatinase/prolidase N-terminal domain"/>
    <property type="match status" value="1"/>
</dbReference>
<dbReference type="InterPro" id="IPR007865">
    <property type="entry name" value="Aminopep_P_N"/>
</dbReference>
<dbReference type="InterPro" id="IPR029149">
    <property type="entry name" value="Creatin/AminoP/Spt16_N"/>
</dbReference>
<dbReference type="InterPro" id="IPR036005">
    <property type="entry name" value="Creatinase/aminopeptidase-like"/>
</dbReference>
<dbReference type="InterPro" id="IPR000994">
    <property type="entry name" value="Pept_M24"/>
</dbReference>
<dbReference type="InterPro" id="IPR052433">
    <property type="entry name" value="X-Pro_dipept-like"/>
</dbReference>
<dbReference type="PANTHER" id="PTHR43226">
    <property type="entry name" value="XAA-PRO AMINOPEPTIDASE 3"/>
    <property type="match status" value="1"/>
</dbReference>
<dbReference type="PANTHER" id="PTHR43226:SF1">
    <property type="entry name" value="XAA-PRO DIPEPTIDASE"/>
    <property type="match status" value="1"/>
</dbReference>
<dbReference type="Pfam" id="PF05195">
    <property type="entry name" value="AMP_N"/>
    <property type="match status" value="1"/>
</dbReference>
<dbReference type="Pfam" id="PF00557">
    <property type="entry name" value="Peptidase_M24"/>
    <property type="match status" value="1"/>
</dbReference>
<dbReference type="SMART" id="SM01011">
    <property type="entry name" value="AMP_N"/>
    <property type="match status" value="1"/>
</dbReference>
<dbReference type="SUPFAM" id="SSF55920">
    <property type="entry name" value="Creatinase/aminopeptidase"/>
    <property type="match status" value="1"/>
</dbReference>
<dbReference type="SUPFAM" id="SSF53092">
    <property type="entry name" value="Creatinase/prolidase N-terminal domain"/>
    <property type="match status" value="1"/>
</dbReference>
<evidence type="ECO:0000250" key="1"/>
<evidence type="ECO:0000305" key="2"/>
<organism>
    <name type="scientific">Emericella nidulans (strain FGSC A4 / ATCC 38163 / CBS 112.46 / NRRL 194 / M139)</name>
    <name type="common">Aspergillus nidulans</name>
    <dbReference type="NCBI Taxonomy" id="227321"/>
    <lineage>
        <taxon>Eukaryota</taxon>
        <taxon>Fungi</taxon>
        <taxon>Dikarya</taxon>
        <taxon>Ascomycota</taxon>
        <taxon>Pezizomycotina</taxon>
        <taxon>Eurotiomycetes</taxon>
        <taxon>Eurotiomycetidae</taxon>
        <taxon>Eurotiales</taxon>
        <taxon>Aspergillaceae</taxon>
        <taxon>Aspergillus</taxon>
        <taxon>Aspergillus subgen. Nidulantes</taxon>
    </lineage>
</organism>